<proteinExistence type="inferred from homology"/>
<evidence type="ECO:0000255" key="1">
    <source>
        <dbReference type="HAMAP-Rule" id="MF_00429"/>
    </source>
</evidence>
<dbReference type="EC" id="7.2.1.1" evidence="1"/>
<dbReference type="EMBL" id="CR378665">
    <property type="protein sequence ID" value="CAG19240.1"/>
    <property type="molecule type" value="Genomic_DNA"/>
</dbReference>
<dbReference type="RefSeq" id="WP_011217578.1">
    <property type="nucleotide sequence ID" value="NC_006370.1"/>
</dbReference>
<dbReference type="SMR" id="Q6LTY5"/>
<dbReference type="STRING" id="298386.PBPRA0827"/>
<dbReference type="KEGG" id="ppr:PBPRA0827"/>
<dbReference type="eggNOG" id="COG2209">
    <property type="taxonomic scope" value="Bacteria"/>
</dbReference>
<dbReference type="HOGENOM" id="CLU_095255_0_0_6"/>
<dbReference type="Proteomes" id="UP000000593">
    <property type="component" value="Chromosome 1"/>
</dbReference>
<dbReference type="GO" id="GO:0009276">
    <property type="term" value="C:Gram-negative-bacterium-type cell wall"/>
    <property type="evidence" value="ECO:0007669"/>
    <property type="project" value="InterPro"/>
</dbReference>
<dbReference type="GO" id="GO:0005886">
    <property type="term" value="C:plasma membrane"/>
    <property type="evidence" value="ECO:0007669"/>
    <property type="project" value="UniProtKB-SubCell"/>
</dbReference>
<dbReference type="GO" id="GO:0016655">
    <property type="term" value="F:oxidoreductase activity, acting on NAD(P)H, quinone or similar compound as acceptor"/>
    <property type="evidence" value="ECO:0007669"/>
    <property type="project" value="UniProtKB-UniRule"/>
</dbReference>
<dbReference type="GO" id="GO:0022904">
    <property type="term" value="P:respiratory electron transport chain"/>
    <property type="evidence" value="ECO:0007669"/>
    <property type="project" value="InterPro"/>
</dbReference>
<dbReference type="GO" id="GO:0006814">
    <property type="term" value="P:sodium ion transport"/>
    <property type="evidence" value="ECO:0007669"/>
    <property type="project" value="UniProtKB-UniRule"/>
</dbReference>
<dbReference type="HAMAP" id="MF_00429">
    <property type="entry name" value="NqrE"/>
    <property type="match status" value="1"/>
</dbReference>
<dbReference type="InterPro" id="IPR003667">
    <property type="entry name" value="NqrDE/RnfAE"/>
</dbReference>
<dbReference type="InterPro" id="IPR050133">
    <property type="entry name" value="NqrDE/RnfAE_oxidrdctase"/>
</dbReference>
<dbReference type="InterPro" id="IPR010967">
    <property type="entry name" value="NqrE"/>
</dbReference>
<dbReference type="NCBIfam" id="TIGR01940">
    <property type="entry name" value="nqrE"/>
    <property type="match status" value="1"/>
</dbReference>
<dbReference type="PANTHER" id="PTHR30335">
    <property type="entry name" value="INTEGRAL MEMBRANE PROTEIN OF SOXR-REDUCING COMPLEX"/>
    <property type="match status" value="1"/>
</dbReference>
<dbReference type="PANTHER" id="PTHR30335:SF1">
    <property type="entry name" value="NA(+)-TRANSLOCATING NADH-QUINONE REDUCTASE SUBUNIT E"/>
    <property type="match status" value="1"/>
</dbReference>
<dbReference type="Pfam" id="PF02508">
    <property type="entry name" value="Rnf-Nqr"/>
    <property type="match status" value="1"/>
</dbReference>
<dbReference type="PIRSF" id="PIRSF006102">
    <property type="entry name" value="NQR_DE"/>
    <property type="match status" value="1"/>
</dbReference>
<reference key="1">
    <citation type="journal article" date="2005" name="Science">
        <title>Life at depth: Photobacterium profundum genome sequence and expression analysis.</title>
        <authorList>
            <person name="Vezzi A."/>
            <person name="Campanaro S."/>
            <person name="D'Angelo M."/>
            <person name="Simonato F."/>
            <person name="Vitulo N."/>
            <person name="Lauro F.M."/>
            <person name="Cestaro A."/>
            <person name="Malacrida G."/>
            <person name="Simionati B."/>
            <person name="Cannata N."/>
            <person name="Romualdi C."/>
            <person name="Bartlett D.H."/>
            <person name="Valle G."/>
        </authorList>
    </citation>
    <scope>NUCLEOTIDE SEQUENCE [LARGE SCALE GENOMIC DNA]</scope>
    <source>
        <strain>ATCC BAA-1253 / SS9</strain>
    </source>
</reference>
<feature type="chain" id="PRO_1000060205" description="Na(+)-translocating NADH-quinone reductase subunit E">
    <location>
        <begin position="1"/>
        <end position="198"/>
    </location>
</feature>
<feature type="transmembrane region" description="Helical" evidence="1">
    <location>
        <begin position="11"/>
        <end position="31"/>
    </location>
</feature>
<feature type="transmembrane region" description="Helical" evidence="1">
    <location>
        <begin position="39"/>
        <end position="59"/>
    </location>
</feature>
<feature type="transmembrane region" description="Helical" evidence="1">
    <location>
        <begin position="77"/>
        <end position="97"/>
    </location>
</feature>
<feature type="transmembrane region" description="Helical" evidence="1">
    <location>
        <begin position="110"/>
        <end position="130"/>
    </location>
</feature>
<feature type="transmembrane region" description="Helical" evidence="1">
    <location>
        <begin position="140"/>
        <end position="160"/>
    </location>
</feature>
<feature type="transmembrane region" description="Helical" evidence="1">
    <location>
        <begin position="176"/>
        <end position="196"/>
    </location>
</feature>
<sequence length="198" mass="21553">MEHYLSLLVRSIFIENMALSFFLGMCTFLAVSKKVKTSFGLGVAVIVVLTIAIPVNNLVYNLLLKDGAIVDGVDLTFLNFITFIGVIAALVQILEMILDRFFPPLYNALGIFLPLITVNCAIFGGVSFMVQRDYNFVESIVYGFGSGVGWMLAIVALAGIREKMKYSDVPPGLRGLGITFITVGLMALGFMSFSGVQL</sequence>
<organism>
    <name type="scientific">Photobacterium profundum (strain SS9)</name>
    <dbReference type="NCBI Taxonomy" id="298386"/>
    <lineage>
        <taxon>Bacteria</taxon>
        <taxon>Pseudomonadati</taxon>
        <taxon>Pseudomonadota</taxon>
        <taxon>Gammaproteobacteria</taxon>
        <taxon>Vibrionales</taxon>
        <taxon>Vibrionaceae</taxon>
        <taxon>Photobacterium</taxon>
    </lineage>
</organism>
<name>NQRE_PHOPR</name>
<accession>Q6LTY5</accession>
<keyword id="KW-0997">Cell inner membrane</keyword>
<keyword id="KW-1003">Cell membrane</keyword>
<keyword id="KW-0406">Ion transport</keyword>
<keyword id="KW-0472">Membrane</keyword>
<keyword id="KW-0520">NAD</keyword>
<keyword id="KW-1185">Reference proteome</keyword>
<keyword id="KW-0915">Sodium</keyword>
<keyword id="KW-0739">Sodium transport</keyword>
<keyword id="KW-1278">Translocase</keyword>
<keyword id="KW-0812">Transmembrane</keyword>
<keyword id="KW-1133">Transmembrane helix</keyword>
<keyword id="KW-0813">Transport</keyword>
<keyword id="KW-0830">Ubiquinone</keyword>
<gene>
    <name evidence="1" type="primary">nqrE</name>
    <name type="ordered locus">PBPRA0827</name>
</gene>
<protein>
    <recommendedName>
        <fullName evidence="1">Na(+)-translocating NADH-quinone reductase subunit E</fullName>
        <shortName evidence="1">Na(+)-NQR subunit E</shortName>
        <shortName evidence="1">Na(+)-translocating NQR subunit E</shortName>
        <ecNumber evidence="1">7.2.1.1</ecNumber>
    </recommendedName>
    <alternativeName>
        <fullName evidence="1">NQR complex subunit E</fullName>
    </alternativeName>
    <alternativeName>
        <fullName evidence="1">NQR-1 subunit E</fullName>
    </alternativeName>
</protein>
<comment type="function">
    <text evidence="1">NQR complex catalyzes the reduction of ubiquinone-1 to ubiquinol by two successive reactions, coupled with the transport of Na(+) ions from the cytoplasm to the periplasm. NqrA to NqrE are probably involved in the second step, the conversion of ubisemiquinone to ubiquinol.</text>
</comment>
<comment type="catalytic activity">
    <reaction evidence="1">
        <text>a ubiquinone + n Na(+)(in) + NADH + H(+) = a ubiquinol + n Na(+)(out) + NAD(+)</text>
        <dbReference type="Rhea" id="RHEA:47748"/>
        <dbReference type="Rhea" id="RHEA-COMP:9565"/>
        <dbReference type="Rhea" id="RHEA-COMP:9566"/>
        <dbReference type="ChEBI" id="CHEBI:15378"/>
        <dbReference type="ChEBI" id="CHEBI:16389"/>
        <dbReference type="ChEBI" id="CHEBI:17976"/>
        <dbReference type="ChEBI" id="CHEBI:29101"/>
        <dbReference type="ChEBI" id="CHEBI:57540"/>
        <dbReference type="ChEBI" id="CHEBI:57945"/>
        <dbReference type="EC" id="7.2.1.1"/>
    </reaction>
</comment>
<comment type="subunit">
    <text evidence="1">Composed of six subunits; NqrA, NqrB, NqrC, NqrD, NqrE and NqrF.</text>
</comment>
<comment type="subcellular location">
    <subcellularLocation>
        <location evidence="1">Cell inner membrane</location>
        <topology evidence="1">Multi-pass membrane protein</topology>
    </subcellularLocation>
</comment>
<comment type="similarity">
    <text evidence="1">Belongs to the NqrDE/RnfAE family.</text>
</comment>